<keyword id="KW-1074">Activation of host NF-kappa-B by virus</keyword>
<keyword id="KW-0010">Activator</keyword>
<keyword id="KW-0053">Apoptosis</keyword>
<keyword id="KW-1035">Host cytoplasm</keyword>
<keyword id="KW-1079">Host G2/M cell cycle arrest by virus</keyword>
<keyword id="KW-1045">Host mitochondrion</keyword>
<keyword id="KW-1048">Host nucleus</keyword>
<keyword id="KW-0945">Host-virus interaction</keyword>
<keyword id="KW-1121">Modulation of host cell cycle by virus</keyword>
<keyword id="KW-0804">Transcription</keyword>
<keyword id="KW-0805">Transcription regulation</keyword>
<evidence type="ECO:0000255" key="1">
    <source>
        <dbReference type="HAMAP-Rule" id="MF_04074"/>
    </source>
</evidence>
<evidence type="ECO:0000256" key="2">
    <source>
        <dbReference type="SAM" id="MobiDB-lite"/>
    </source>
</evidence>
<protein>
    <recommendedName>
        <fullName evidence="1">Protein X</fullName>
    </recommendedName>
    <alternativeName>
        <fullName evidence="1">HBx</fullName>
    </alternativeName>
    <alternativeName>
        <fullName evidence="1">Peptide X</fullName>
    </alternativeName>
    <alternativeName>
        <fullName evidence="1">pX</fullName>
    </alternativeName>
</protein>
<gene>
    <name evidence="1" type="primary">X</name>
</gene>
<accession>Q05499</accession>
<dbReference type="EMBL" id="X69798">
    <property type="protein sequence ID" value="CAA49453.1"/>
    <property type="molecule type" value="Genomic_DNA"/>
</dbReference>
<dbReference type="PIR" id="JQ2228">
    <property type="entry name" value="JQ2228"/>
</dbReference>
<dbReference type="SMR" id="Q05499"/>
<dbReference type="DIP" id="DIP-522N"/>
<dbReference type="Proteomes" id="UP000008284">
    <property type="component" value="Segment"/>
</dbReference>
<dbReference type="GO" id="GO:0033650">
    <property type="term" value="C:host cell mitochondrion"/>
    <property type="evidence" value="ECO:0007669"/>
    <property type="project" value="UniProtKB-SubCell"/>
</dbReference>
<dbReference type="GO" id="GO:0042025">
    <property type="term" value="C:host cell nucleus"/>
    <property type="evidence" value="ECO:0007669"/>
    <property type="project" value="UniProtKB-SubCell"/>
</dbReference>
<dbReference type="GO" id="GO:0006351">
    <property type="term" value="P:DNA-templated transcription"/>
    <property type="evidence" value="ECO:0007669"/>
    <property type="project" value="UniProtKB-UniRule"/>
</dbReference>
<dbReference type="GO" id="GO:0085033">
    <property type="term" value="P:symbiont-mediated activation of host NF-kappaB cascade"/>
    <property type="evidence" value="ECO:0007669"/>
    <property type="project" value="UniProtKB-UniRule"/>
</dbReference>
<dbReference type="GO" id="GO:0039592">
    <property type="term" value="P:symbiont-mediated arrest of host cell cycle during G2/M transition"/>
    <property type="evidence" value="ECO:0007669"/>
    <property type="project" value="UniProtKB-UniRule"/>
</dbReference>
<dbReference type="GO" id="GO:0019079">
    <property type="term" value="P:viral genome replication"/>
    <property type="evidence" value="ECO:0007669"/>
    <property type="project" value="UniProtKB-UniRule"/>
</dbReference>
<dbReference type="HAMAP" id="MF_04074">
    <property type="entry name" value="HBV_X"/>
    <property type="match status" value="1"/>
</dbReference>
<dbReference type="InterPro" id="IPR000236">
    <property type="entry name" value="Transactivation_prot_X"/>
</dbReference>
<dbReference type="Pfam" id="PF00739">
    <property type="entry name" value="X"/>
    <property type="match status" value="1"/>
</dbReference>
<feature type="chain" id="PRO_0000222369" description="Protein X">
    <location>
        <begin position="1"/>
        <end position="154"/>
    </location>
</feature>
<feature type="region of interest" description="Disordered" evidence="2">
    <location>
        <begin position="28"/>
        <end position="50"/>
    </location>
</feature>
<feature type="region of interest" description="Mitochondrial targeting sequence" evidence="1">
    <location>
        <begin position="68"/>
        <end position="117"/>
    </location>
</feature>
<feature type="compositionally biased region" description="Low complexity" evidence="2">
    <location>
        <begin position="33"/>
        <end position="48"/>
    </location>
</feature>
<comment type="function">
    <text evidence="1">Multifunctional protein that plays a role in silencing host antiviral defenses and promoting viral transcription. Does not seem to be essential for HBV infection. May be directly involved in development of cirrhosis and liver cancer (hepatocellular carcinoma). Most of cytosolic activities involve modulation of cytosolic calcium. The effect on apoptosis is controversial depending on the cell types in which the studies have been conducted. May induce apoptosis by localizing in mitochondria and causing loss of mitochondrial membrane potential. May also modulate apoptosis by binding host CFLAR, a key regulator of the death-inducing signaling complex (DISC). Promotes viral transcription by using the host E3 ubiquitin ligase DDB1 to target the SMC5-SMC6 complex to proteasomal degradation. This host complex would otherwise bind to viral episomal DNA, and prevents its transcription. Moderately stimulates transcription of many different viral and cellular transcription elements. Promoters and enhancers stimulated by HBx contain DNA binding sites for NF-kappa-B, AP-1, AP-2, c-EBP, ATF/CREB, or the calcium-activated factor NF-AT.</text>
</comment>
<comment type="subunit">
    <text evidence="1">May form homodimer. May interact with host CEBPA, CFLAR, CREB1, DDB1, E4F1, HBXIP, HSPD1/HSP60, NFKBIA, POLR2E and SMAD4. Interacts with host SMC5-SMC6 complex and induces its degradation. Interacts with host TRPC4AP; leading to prevent ubiquitination of TRPC4AP. Interacts with host PLSCR1; this interaction promotes ubiquitination and degradation of HBx and impairs HBx-mediated cell proliferation.</text>
</comment>
<comment type="subcellular location">
    <subcellularLocation>
        <location evidence="1">Host cytoplasm</location>
    </subcellularLocation>
    <subcellularLocation>
        <location evidence="1">Host nucleus</location>
    </subcellularLocation>
    <subcellularLocation>
        <location evidence="1">Host mitochondrion</location>
    </subcellularLocation>
    <text evidence="1">Mainly cytoplasmic as only a fraction is detected in the nucleus. In cytoplasm, a minor fraction associates with mitochondria or proteasomes.</text>
</comment>
<comment type="PTM">
    <text evidence="1">A fraction may be phosphorylated in insect cells and HepG2 cells, a human hepatoblastoma cell line. Phosphorylated in vitro by host protein kinase C or mitogen-activated protein kinase. N-acetylated in insect cells.</text>
</comment>
<comment type="similarity">
    <text evidence="1">Belongs to the orthohepadnavirus protein X family.</text>
</comment>
<comment type="caution">
    <text>Transcriptional activities should be taken with a grain of salt. As of 2007, all studies demonstrating in vivo interaction between protein X and transcriptional components were performed with significant overexpression of both proteins and in the absence of viral infection.</text>
</comment>
<organismHost>
    <name type="scientific">Homo sapiens</name>
    <name type="common">Human</name>
    <dbReference type="NCBI Taxonomy" id="9606"/>
</organismHost>
<organismHost>
    <name type="scientific">Pan troglodytes</name>
    <name type="common">Chimpanzee</name>
    <dbReference type="NCBI Taxonomy" id="9598"/>
</organismHost>
<name>X_HBVF1</name>
<reference key="1">
    <citation type="journal article" date="1993" name="J. Gen. Virol.">
        <title>Identification of a new hepatitis B virus (HBV) genotype from Brazil that expresses HBV surface antigen subtype adw4.</title>
        <authorList>
            <person name="Naumann H."/>
            <person name="Schaefer S."/>
            <person name="Yoshida C.F.T."/>
            <person name="Gaspar A.M.C."/>
            <person name="Repp R."/>
            <person name="Gerlich W.H."/>
        </authorList>
    </citation>
    <scope>NUCLEOTIDE SEQUENCE [GENOMIC DNA]</scope>
</reference>
<reference key="2">
    <citation type="journal article" date="2004" name="J. Virol.">
        <title>The enigmatic X gene of hepatitis B virus.</title>
        <authorList>
            <person name="Bouchard M.J."/>
            <person name="Schneider R.J."/>
        </authorList>
    </citation>
    <scope>REVIEW</scope>
</reference>
<reference key="3">
    <citation type="journal article" date="2006" name="Cancer Sci.">
        <title>Molecular functions and biological roles of hepatitis B virus x protein.</title>
        <authorList>
            <person name="Tang H."/>
            <person name="Oishi N."/>
            <person name="Kaneko S."/>
            <person name="Murakami S."/>
        </authorList>
    </citation>
    <scope>REVIEW</scope>
</reference>
<proteinExistence type="inferred from homology"/>
<sequence length="154" mass="16715">MAARMCCKLDPARDVLCLRPIGAESRGRPLPGPLGAVPPSSPSAVPADDGSHLSLRGLPVCSFSSAGPCALRFTSARRMETTVNAPWSLPTVLHKRTLGLSGWSMTWIEEYIKDCVFKDWEELGEEIRLKVFVLGGCRHKLVCSPAPCNFFTSA</sequence>
<organism>
    <name type="scientific">Hepatitis B virus genotype F2 (isolate Brazil/w4B)</name>
    <name type="common">HBV-F</name>
    <dbReference type="NCBI Taxonomy" id="45410"/>
    <lineage>
        <taxon>Viruses</taxon>
        <taxon>Riboviria</taxon>
        <taxon>Pararnavirae</taxon>
        <taxon>Artverviricota</taxon>
        <taxon>Revtraviricetes</taxon>
        <taxon>Blubervirales</taxon>
        <taxon>Hepadnaviridae</taxon>
        <taxon>Orthohepadnavirus</taxon>
        <taxon>Hepatitis B virus</taxon>
    </lineage>
</organism>